<proteinExistence type="evidence at protein level"/>
<dbReference type="EMBL" id="AE000782">
    <property type="protein sequence ID" value="AAB89393.1"/>
    <property type="molecule type" value="Genomic_DNA"/>
</dbReference>
<dbReference type="PIR" id="E69482">
    <property type="entry name" value="E69482"/>
</dbReference>
<dbReference type="RefSeq" id="WP_010879355.1">
    <property type="nucleotide sequence ID" value="NC_000917.1"/>
</dbReference>
<dbReference type="PDB" id="2OEB">
    <property type="method" value="X-ray"/>
    <property type="resolution" value="1.66 A"/>
    <property type="chains" value="A=1-155"/>
</dbReference>
<dbReference type="PDB" id="3X1L">
    <property type="method" value="X-ray"/>
    <property type="resolution" value="2.10 A"/>
    <property type="chains" value="F/G=1-155"/>
</dbReference>
<dbReference type="PDBsum" id="2OEB"/>
<dbReference type="PDBsum" id="3X1L"/>
<dbReference type="SMR" id="O28417"/>
<dbReference type="STRING" id="224325.AF_1862"/>
<dbReference type="PaxDb" id="224325-AF_1862"/>
<dbReference type="EnsemblBacteria" id="AAB89393">
    <property type="protein sequence ID" value="AAB89393"/>
    <property type="gene ID" value="AF_1862"/>
</dbReference>
<dbReference type="GeneID" id="24795603"/>
<dbReference type="KEGG" id="afu:AF_1862"/>
<dbReference type="eggNOG" id="arCOG02654">
    <property type="taxonomic scope" value="Archaea"/>
</dbReference>
<dbReference type="HOGENOM" id="CLU_120836_0_0_2"/>
<dbReference type="OrthoDB" id="134220at2157"/>
<dbReference type="PhylomeDB" id="O28417"/>
<dbReference type="EvolutionaryTrace" id="O28417"/>
<dbReference type="Proteomes" id="UP000002199">
    <property type="component" value="Chromosome"/>
</dbReference>
<dbReference type="GO" id="GO:0005737">
    <property type="term" value="C:cytoplasm"/>
    <property type="evidence" value="ECO:0007669"/>
    <property type="project" value="UniProtKB-SubCell"/>
</dbReference>
<dbReference type="GO" id="GO:0051607">
    <property type="term" value="P:defense response to virus"/>
    <property type="evidence" value="ECO:0007669"/>
    <property type="project" value="UniProtKB-KW"/>
</dbReference>
<dbReference type="CDD" id="cd09654">
    <property type="entry name" value="Cmr5_III-B"/>
    <property type="match status" value="1"/>
</dbReference>
<dbReference type="Gene3D" id="1.10.520.30">
    <property type="entry name" value="AF1862-like domain"/>
    <property type="match status" value="1"/>
</dbReference>
<dbReference type="InterPro" id="IPR023101">
    <property type="entry name" value="AF1862-like_dom_sf"/>
</dbReference>
<dbReference type="InterPro" id="IPR010160">
    <property type="entry name" value="CRISPR-assoc_prot_Cmr5"/>
</dbReference>
<dbReference type="NCBIfam" id="TIGR01881">
    <property type="entry name" value="cas_Cmr5"/>
    <property type="match status" value="1"/>
</dbReference>
<dbReference type="Pfam" id="PF09701">
    <property type="entry name" value="Cas_Cmr5"/>
    <property type="match status" value="1"/>
</dbReference>
<dbReference type="SUPFAM" id="SSF158568">
    <property type="entry name" value="AF1862-like"/>
    <property type="match status" value="1"/>
</dbReference>
<comment type="function">
    <text evidence="1">CRISPR (clustered regularly interspaced short palindromic repeat), is an adaptive immune system that provides protection against mobile genetic elements (viruses, transposable elements and conjugative plasmids). CRISPR clusters contain sequences complementary to antecedent mobile elements and target invading nucleic acids. CRISPR clusters are transcribed and processed into CRISPR RNA (crRNA). Part of the Cmr ribonucleoprotein complex (By similarity).</text>
</comment>
<comment type="subcellular location">
    <subcellularLocation>
        <location evidence="1">Cytoplasm</location>
    </subcellularLocation>
</comment>
<comment type="similarity">
    <text evidence="2">Belongs to the CRISPR system Cmr5 family.</text>
</comment>
<reference key="1">
    <citation type="journal article" date="1997" name="Nature">
        <title>The complete genome sequence of the hyperthermophilic, sulphate-reducing archaeon Archaeoglobus fulgidus.</title>
        <authorList>
            <person name="Klenk H.-P."/>
            <person name="Clayton R.A."/>
            <person name="Tomb J.-F."/>
            <person name="White O."/>
            <person name="Nelson K.E."/>
            <person name="Ketchum K.A."/>
            <person name="Dodson R.J."/>
            <person name="Gwinn M.L."/>
            <person name="Hickey E.K."/>
            <person name="Peterson J.D."/>
            <person name="Richardson D.L."/>
            <person name="Kerlavage A.R."/>
            <person name="Graham D.E."/>
            <person name="Kyrpides N.C."/>
            <person name="Fleischmann R.D."/>
            <person name="Quackenbush J."/>
            <person name="Lee N.H."/>
            <person name="Sutton G.G."/>
            <person name="Gill S.R."/>
            <person name="Kirkness E.F."/>
            <person name="Dougherty B.A."/>
            <person name="McKenney K."/>
            <person name="Adams M.D."/>
            <person name="Loftus B.J."/>
            <person name="Peterson S.N."/>
            <person name="Reich C.I."/>
            <person name="McNeil L.K."/>
            <person name="Badger J.H."/>
            <person name="Glodek A."/>
            <person name="Zhou L."/>
            <person name="Overbeek R."/>
            <person name="Gocayne J.D."/>
            <person name="Weidman J.F."/>
            <person name="McDonald L.A."/>
            <person name="Utterback T.R."/>
            <person name="Cotton M.D."/>
            <person name="Spriggs T."/>
            <person name="Artiach P."/>
            <person name="Kaine B.P."/>
            <person name="Sykes S.M."/>
            <person name="Sadow P.W."/>
            <person name="D'Andrea K.P."/>
            <person name="Bowman C."/>
            <person name="Fujii C."/>
            <person name="Garland S.A."/>
            <person name="Mason T.M."/>
            <person name="Olsen G.J."/>
            <person name="Fraser C.M."/>
            <person name="Smith H.O."/>
            <person name="Woese C.R."/>
            <person name="Venter J.C."/>
        </authorList>
    </citation>
    <scope>NUCLEOTIDE SEQUENCE [LARGE SCALE GENOMIC DNA]</scope>
    <source>
        <strain>ATCC 49558 / DSM 4304 / JCM 9628 / NBRC 100126 / VC-16</strain>
    </source>
</reference>
<reference key="2">
    <citation type="submission" date="2006-12" db="PDB data bank">
        <title>The crystal structure of gene product Af1862 from Archaeoglobus fulgidus.</title>
        <authorList>
            <person name="Zhang R."/>
            <person name="Evdokimova E."/>
            <person name="Kagan O."/>
            <person name="Savchenko A."/>
            <person name="Edwards A."/>
            <person name="Joachimiak A."/>
        </authorList>
    </citation>
    <scope>X-RAY CRYSTALLOGRAPHY (1.66 ANGSTROMS)</scope>
</reference>
<feature type="chain" id="PRO_0000418434" description="CRISPR system Cmr subunit Cmr5">
    <location>
        <begin position="1"/>
        <end position="155"/>
    </location>
</feature>
<feature type="helix" evidence="3">
    <location>
        <begin position="3"/>
        <end position="24"/>
    </location>
</feature>
<feature type="turn" evidence="3">
    <location>
        <begin position="25"/>
        <end position="27"/>
    </location>
</feature>
<feature type="helix" evidence="3">
    <location>
        <begin position="29"/>
        <end position="49"/>
    </location>
</feature>
<feature type="helix" evidence="3">
    <location>
        <begin position="51"/>
        <end position="60"/>
    </location>
</feature>
<feature type="helix" evidence="3">
    <location>
        <begin position="71"/>
        <end position="73"/>
    </location>
</feature>
<feature type="helix" evidence="3">
    <location>
        <begin position="76"/>
        <end position="78"/>
    </location>
</feature>
<feature type="strand" evidence="3">
    <location>
        <begin position="79"/>
        <end position="81"/>
    </location>
</feature>
<feature type="helix" evidence="3">
    <location>
        <begin position="82"/>
        <end position="100"/>
    </location>
</feature>
<feature type="helix" evidence="3">
    <location>
        <begin position="117"/>
        <end position="123"/>
    </location>
</feature>
<feature type="helix" evidence="3">
    <location>
        <begin position="126"/>
        <end position="150"/>
    </location>
</feature>
<organism>
    <name type="scientific">Archaeoglobus fulgidus (strain ATCC 49558 / DSM 4304 / JCM 9628 / NBRC 100126 / VC-16)</name>
    <dbReference type="NCBI Taxonomy" id="224325"/>
    <lineage>
        <taxon>Archaea</taxon>
        <taxon>Methanobacteriati</taxon>
        <taxon>Methanobacteriota</taxon>
        <taxon>Archaeoglobi</taxon>
        <taxon>Archaeoglobales</taxon>
        <taxon>Archaeoglobaceae</taxon>
        <taxon>Archaeoglobus</taxon>
    </lineage>
</organism>
<keyword id="KW-0002">3D-structure</keyword>
<keyword id="KW-0051">Antiviral defense</keyword>
<keyword id="KW-0963">Cytoplasm</keyword>
<keyword id="KW-1185">Reference proteome</keyword>
<evidence type="ECO:0000250" key="1"/>
<evidence type="ECO:0000305" key="2"/>
<evidence type="ECO:0007829" key="3">
    <source>
        <dbReference type="PDB" id="2OEB"/>
    </source>
</evidence>
<name>CMR5_ARCFU</name>
<protein>
    <recommendedName>
        <fullName>CRISPR system Cmr subunit Cmr5</fullName>
    </recommendedName>
    <alternativeName>
        <fullName>CRISPR type III-B/RAMP module-associated protein Cmr5</fullName>
    </alternativeName>
</protein>
<accession>O28417</accession>
<gene>
    <name type="primary">cmr5</name>
    <name type="ordered locus">AF_1862</name>
</gene>
<sequence length="155" mass="17388">MDIREIEQERASFAFKVVSDIKDKYSQNKKVQGKYSSYAEKAPTIILNNGLGATLAFFLSKLEKPIDDVDYKSINPESFGNAENIAYAFLYKHLSTWLAEGNGKDSAFSGLTNGEDPLKYIMEKTAIDVAISTEEALSILNWIKKFAKAMLEEEL</sequence>